<proteinExistence type="inferred from homology"/>
<dbReference type="EC" id="2.5.1.61"/>
<dbReference type="EMBL" id="AE001363">
    <property type="protein sequence ID" value="AAD18205.1"/>
    <property type="molecule type" value="Genomic_DNA"/>
</dbReference>
<dbReference type="EMBL" id="AE002161">
    <property type="protein sequence ID" value="AAF38528.1"/>
    <property type="molecule type" value="Genomic_DNA"/>
</dbReference>
<dbReference type="EMBL" id="BA000008">
    <property type="protein sequence ID" value="BAA98263.1"/>
    <property type="molecule type" value="Genomic_DNA"/>
</dbReference>
<dbReference type="EMBL" id="AE009440">
    <property type="protein sequence ID" value="AAP97986.1"/>
    <property type="molecule type" value="Genomic_DNA"/>
</dbReference>
<dbReference type="PIR" id="B72126">
    <property type="entry name" value="B72126"/>
</dbReference>
<dbReference type="PIR" id="E86497">
    <property type="entry name" value="E86497"/>
</dbReference>
<dbReference type="RefSeq" id="NP_224260.1">
    <property type="nucleotide sequence ID" value="NC_000922.1"/>
</dbReference>
<dbReference type="RefSeq" id="WP_010882702.1">
    <property type="nucleotide sequence ID" value="NZ_LN847257.1"/>
</dbReference>
<dbReference type="SMR" id="Q9Z9C9"/>
<dbReference type="STRING" id="406984.CPK_ORF00554"/>
<dbReference type="GeneID" id="45050096"/>
<dbReference type="KEGG" id="cpa:CP_0723"/>
<dbReference type="KEGG" id="cpj:hemC"/>
<dbReference type="KEGG" id="cpn:CPn_0052"/>
<dbReference type="KEGG" id="cpt:CpB0053"/>
<dbReference type="PATRIC" id="fig|115713.3.peg.60"/>
<dbReference type="eggNOG" id="COG0181">
    <property type="taxonomic scope" value="Bacteria"/>
</dbReference>
<dbReference type="HOGENOM" id="CLU_019704_2_0_0"/>
<dbReference type="OrthoDB" id="17762at2"/>
<dbReference type="UniPathway" id="UPA00251">
    <property type="reaction ID" value="UER00319"/>
</dbReference>
<dbReference type="Proteomes" id="UP000000583">
    <property type="component" value="Chromosome"/>
</dbReference>
<dbReference type="Proteomes" id="UP000000801">
    <property type="component" value="Chromosome"/>
</dbReference>
<dbReference type="GO" id="GO:0005737">
    <property type="term" value="C:cytoplasm"/>
    <property type="evidence" value="ECO:0007669"/>
    <property type="project" value="TreeGrafter"/>
</dbReference>
<dbReference type="GO" id="GO:0004418">
    <property type="term" value="F:hydroxymethylbilane synthase activity"/>
    <property type="evidence" value="ECO:0007669"/>
    <property type="project" value="UniProtKB-EC"/>
</dbReference>
<dbReference type="GO" id="GO:0006782">
    <property type="term" value="P:protoporphyrinogen IX biosynthetic process"/>
    <property type="evidence" value="ECO:0007669"/>
    <property type="project" value="UniProtKB-UniPathway"/>
</dbReference>
<dbReference type="Gene3D" id="3.40.190.10">
    <property type="entry name" value="Periplasmic binding protein-like II"/>
    <property type="match status" value="2"/>
</dbReference>
<dbReference type="InterPro" id="IPR000860">
    <property type="entry name" value="HemC"/>
</dbReference>
<dbReference type="InterPro" id="IPR022417">
    <property type="entry name" value="Porphobilin_deaminase_N"/>
</dbReference>
<dbReference type="NCBIfam" id="NF002202">
    <property type="entry name" value="PRK01066.1"/>
    <property type="match status" value="1"/>
</dbReference>
<dbReference type="PANTHER" id="PTHR11557">
    <property type="entry name" value="PORPHOBILINOGEN DEAMINASE"/>
    <property type="match status" value="1"/>
</dbReference>
<dbReference type="PANTHER" id="PTHR11557:SF0">
    <property type="entry name" value="PORPHOBILINOGEN DEAMINASE"/>
    <property type="match status" value="1"/>
</dbReference>
<dbReference type="Pfam" id="PF01379">
    <property type="entry name" value="Porphobil_deam"/>
    <property type="match status" value="1"/>
</dbReference>
<dbReference type="PRINTS" id="PR00151">
    <property type="entry name" value="PORPHBDMNASE"/>
</dbReference>
<dbReference type="SUPFAM" id="SSF53850">
    <property type="entry name" value="Periplasmic binding protein-like II"/>
    <property type="match status" value="1"/>
</dbReference>
<protein>
    <recommendedName>
        <fullName>Probable porphobilinogen deaminase</fullName>
        <shortName>PBG</shortName>
        <ecNumber>2.5.1.61</ecNumber>
    </recommendedName>
    <alternativeName>
        <fullName>Hydroxymethylbilane synthase</fullName>
        <shortName>HMBS</shortName>
    </alternativeName>
    <alternativeName>
        <fullName>Pre-uroporphyrinogen synthase</fullName>
    </alternativeName>
</protein>
<gene>
    <name type="primary">hemC</name>
    <name type="ordered locus">CPn_0052</name>
    <name type="ordered locus">CP_0723</name>
    <name type="ordered locus">CpB0053</name>
</gene>
<comment type="function">
    <text evidence="1">Tetrapolymerization of the monopyrrole PBG into the hydroxymethylbilane pre-uroporphyrinogen in several discrete steps.</text>
</comment>
<comment type="catalytic activity">
    <reaction>
        <text>4 porphobilinogen + H2O = hydroxymethylbilane + 4 NH4(+)</text>
        <dbReference type="Rhea" id="RHEA:13185"/>
        <dbReference type="ChEBI" id="CHEBI:15377"/>
        <dbReference type="ChEBI" id="CHEBI:28938"/>
        <dbReference type="ChEBI" id="CHEBI:57845"/>
        <dbReference type="ChEBI" id="CHEBI:58126"/>
        <dbReference type="EC" id="2.5.1.61"/>
    </reaction>
</comment>
<comment type="pathway">
    <text>Porphyrin-containing compound metabolism; protoporphyrin-IX biosynthesis; coproporphyrinogen-III from 5-aminolevulinate: step 2/4.</text>
</comment>
<comment type="similarity">
    <text evidence="2">Belongs to the HMBS family.</text>
</comment>
<comment type="caution">
    <text evidence="2">This sequence may not function as a hydroxymethylbilane synthase because it lacks the cysteine residue necessary for attachment of the dipyrromethane cofactor.</text>
</comment>
<keyword id="KW-0627">Porphyrin biosynthesis</keyword>
<keyword id="KW-0808">Transferase</keyword>
<accession>Q9Z9C9</accession>
<organism>
    <name type="scientific">Chlamydia pneumoniae</name>
    <name type="common">Chlamydophila pneumoniae</name>
    <dbReference type="NCBI Taxonomy" id="83558"/>
    <lineage>
        <taxon>Bacteria</taxon>
        <taxon>Pseudomonadati</taxon>
        <taxon>Chlamydiota</taxon>
        <taxon>Chlamydiia</taxon>
        <taxon>Chlamydiales</taxon>
        <taxon>Chlamydiaceae</taxon>
        <taxon>Chlamydia/Chlamydophila group</taxon>
        <taxon>Chlamydia</taxon>
    </lineage>
</organism>
<name>HEM3_CHLPN</name>
<evidence type="ECO:0000250" key="1"/>
<evidence type="ECO:0000305" key="2"/>
<sequence>MLSVCYSDPCLSDFCQGKRPLRIASRNSNLAKAQVHECISLLRSWYPKLWFQLSTTETTGDREKKIPLHLVENSYFFTDGVDALVHKGVCDLAIHSAKDLPETPSLPVVAITRCLHPADLLVYADHYVHEPLPLSPRLGSSSLRRSAVLKQLFPQGQILDIRGTIEERLDQLHRGHYDAIVLAKAASLRLHLHHAYSIELPPPYHALQGSLAITAKDHAGKWKQLFTPIHCHSS</sequence>
<feature type="chain" id="PRO_0000143018" description="Probable porphobilinogen deaminase">
    <location>
        <begin position="1"/>
        <end position="234"/>
    </location>
</feature>
<reference key="1">
    <citation type="journal article" date="1999" name="Nat. Genet.">
        <title>Comparative genomes of Chlamydia pneumoniae and C. trachomatis.</title>
        <authorList>
            <person name="Kalman S."/>
            <person name="Mitchell W.P."/>
            <person name="Marathe R."/>
            <person name="Lammel C.J."/>
            <person name="Fan J."/>
            <person name="Hyman R.W."/>
            <person name="Olinger L."/>
            <person name="Grimwood J."/>
            <person name="Davis R.W."/>
            <person name="Stephens R.S."/>
        </authorList>
    </citation>
    <scope>NUCLEOTIDE SEQUENCE [LARGE SCALE GENOMIC DNA]</scope>
    <source>
        <strain>CWL029</strain>
    </source>
</reference>
<reference key="2">
    <citation type="journal article" date="2000" name="Nucleic Acids Res.">
        <title>Genome sequences of Chlamydia trachomatis MoPn and Chlamydia pneumoniae AR39.</title>
        <authorList>
            <person name="Read T.D."/>
            <person name="Brunham R.C."/>
            <person name="Shen C."/>
            <person name="Gill S.R."/>
            <person name="Heidelberg J.F."/>
            <person name="White O."/>
            <person name="Hickey E.K."/>
            <person name="Peterson J.D."/>
            <person name="Utterback T.R."/>
            <person name="Berry K.J."/>
            <person name="Bass S."/>
            <person name="Linher K.D."/>
            <person name="Weidman J.F."/>
            <person name="Khouri H.M."/>
            <person name="Craven B."/>
            <person name="Bowman C."/>
            <person name="Dodson R.J."/>
            <person name="Gwinn M.L."/>
            <person name="Nelson W.C."/>
            <person name="DeBoy R.T."/>
            <person name="Kolonay J.F."/>
            <person name="McClarty G."/>
            <person name="Salzberg S.L."/>
            <person name="Eisen J.A."/>
            <person name="Fraser C.M."/>
        </authorList>
    </citation>
    <scope>NUCLEOTIDE SEQUENCE [LARGE SCALE GENOMIC DNA]</scope>
    <source>
        <strain>AR39</strain>
    </source>
</reference>
<reference key="3">
    <citation type="journal article" date="2000" name="Nucleic Acids Res.">
        <title>Comparison of whole genome sequences of Chlamydia pneumoniae J138 from Japan and CWL029 from USA.</title>
        <authorList>
            <person name="Shirai M."/>
            <person name="Hirakawa H."/>
            <person name="Kimoto M."/>
            <person name="Tabuchi M."/>
            <person name="Kishi F."/>
            <person name="Ouchi K."/>
            <person name="Shiba T."/>
            <person name="Ishii K."/>
            <person name="Hattori M."/>
            <person name="Kuhara S."/>
            <person name="Nakazawa T."/>
        </authorList>
    </citation>
    <scope>NUCLEOTIDE SEQUENCE [LARGE SCALE GENOMIC DNA]</scope>
    <source>
        <strain>J138</strain>
    </source>
</reference>
<reference key="4">
    <citation type="submission" date="2002-05" db="EMBL/GenBank/DDBJ databases">
        <title>The genome sequence of Chlamydia pneumoniae TW183 and comparison with other Chlamydia strains based on whole genome sequence analysis.</title>
        <authorList>
            <person name="Geng M.M."/>
            <person name="Schuhmacher A."/>
            <person name="Muehldorfer I."/>
            <person name="Bensch K.W."/>
            <person name="Schaefer K.P."/>
            <person name="Schneider S."/>
            <person name="Pohl T."/>
            <person name="Essig A."/>
            <person name="Marre R."/>
            <person name="Melchers K."/>
        </authorList>
    </citation>
    <scope>NUCLEOTIDE SEQUENCE [LARGE SCALE GENOMIC DNA]</scope>
    <source>
        <strain>TW-183</strain>
    </source>
</reference>